<sequence length="151" mass="16156">MKKIDVKILDPRVGKEFPLPTYATSGSAGLDLRACLDDAVELAPGDTTLVPTGLAIHIADPSLAAMMLPRSGLGHKHGIVLGNLVGLIDSDYQGQLMISVWNRGQDSFTIQPGERIAQMIFVPVVQAEFNLVEDFDATDRGEGGFGHSGRQ</sequence>
<feature type="chain" id="PRO_1000119234" description="Deoxyuridine 5'-triphosphate nucleotidohydrolase">
    <location>
        <begin position="1"/>
        <end position="151"/>
    </location>
</feature>
<feature type="binding site" evidence="1">
    <location>
        <begin position="70"/>
        <end position="72"/>
    </location>
    <ligand>
        <name>substrate</name>
    </ligand>
</feature>
<feature type="binding site" evidence="1">
    <location>
        <position position="83"/>
    </location>
    <ligand>
        <name>substrate</name>
    </ligand>
</feature>
<feature type="binding site" evidence="1">
    <location>
        <begin position="87"/>
        <end position="89"/>
    </location>
    <ligand>
        <name>substrate</name>
    </ligand>
</feature>
<feature type="binding site" evidence="1">
    <location>
        <position position="97"/>
    </location>
    <ligand>
        <name>substrate</name>
    </ligand>
</feature>
<name>DUT_ECO27</name>
<reference key="1">
    <citation type="journal article" date="2009" name="J. Bacteriol.">
        <title>Complete genome sequence and comparative genome analysis of enteropathogenic Escherichia coli O127:H6 strain E2348/69.</title>
        <authorList>
            <person name="Iguchi A."/>
            <person name="Thomson N.R."/>
            <person name="Ogura Y."/>
            <person name="Saunders D."/>
            <person name="Ooka T."/>
            <person name="Henderson I.R."/>
            <person name="Harris D."/>
            <person name="Asadulghani M."/>
            <person name="Kurokawa K."/>
            <person name="Dean P."/>
            <person name="Kenny B."/>
            <person name="Quail M.A."/>
            <person name="Thurston S."/>
            <person name="Dougan G."/>
            <person name="Hayashi T."/>
            <person name="Parkhill J."/>
            <person name="Frankel G."/>
        </authorList>
    </citation>
    <scope>NUCLEOTIDE SEQUENCE [LARGE SCALE GENOMIC DNA]</scope>
    <source>
        <strain>E2348/69 / EPEC</strain>
    </source>
</reference>
<protein>
    <recommendedName>
        <fullName evidence="1">Deoxyuridine 5'-triphosphate nucleotidohydrolase</fullName>
        <shortName evidence="1">dUTPase</shortName>
        <ecNumber evidence="1">3.6.1.23</ecNumber>
    </recommendedName>
    <alternativeName>
        <fullName evidence="1">dUTP pyrophosphatase</fullName>
    </alternativeName>
</protein>
<keyword id="KW-0378">Hydrolase</keyword>
<keyword id="KW-0460">Magnesium</keyword>
<keyword id="KW-0479">Metal-binding</keyword>
<keyword id="KW-0546">Nucleotide metabolism</keyword>
<keyword id="KW-1185">Reference proteome</keyword>
<evidence type="ECO:0000255" key="1">
    <source>
        <dbReference type="HAMAP-Rule" id="MF_00116"/>
    </source>
</evidence>
<organism>
    <name type="scientific">Escherichia coli O127:H6 (strain E2348/69 / EPEC)</name>
    <dbReference type="NCBI Taxonomy" id="574521"/>
    <lineage>
        <taxon>Bacteria</taxon>
        <taxon>Pseudomonadati</taxon>
        <taxon>Pseudomonadota</taxon>
        <taxon>Gammaproteobacteria</taxon>
        <taxon>Enterobacterales</taxon>
        <taxon>Enterobacteriaceae</taxon>
        <taxon>Escherichia</taxon>
    </lineage>
</organism>
<proteinExistence type="inferred from homology"/>
<accession>B7UM46</accession>
<dbReference type="EC" id="3.6.1.23" evidence="1"/>
<dbReference type="EMBL" id="FM180568">
    <property type="protein sequence ID" value="CAS11436.1"/>
    <property type="molecule type" value="Genomic_DNA"/>
</dbReference>
<dbReference type="SMR" id="B7UM46"/>
<dbReference type="KEGG" id="ecg:E2348C_3888"/>
<dbReference type="HOGENOM" id="CLU_068508_1_1_6"/>
<dbReference type="UniPathway" id="UPA00610">
    <property type="reaction ID" value="UER00666"/>
</dbReference>
<dbReference type="Proteomes" id="UP000008205">
    <property type="component" value="Chromosome"/>
</dbReference>
<dbReference type="GO" id="GO:0004170">
    <property type="term" value="F:dUTP diphosphatase activity"/>
    <property type="evidence" value="ECO:0007669"/>
    <property type="project" value="UniProtKB-UniRule"/>
</dbReference>
<dbReference type="GO" id="GO:0000287">
    <property type="term" value="F:magnesium ion binding"/>
    <property type="evidence" value="ECO:0007669"/>
    <property type="project" value="UniProtKB-UniRule"/>
</dbReference>
<dbReference type="GO" id="GO:0006226">
    <property type="term" value="P:dUMP biosynthetic process"/>
    <property type="evidence" value="ECO:0007669"/>
    <property type="project" value="UniProtKB-UniRule"/>
</dbReference>
<dbReference type="GO" id="GO:0046081">
    <property type="term" value="P:dUTP catabolic process"/>
    <property type="evidence" value="ECO:0007669"/>
    <property type="project" value="InterPro"/>
</dbReference>
<dbReference type="CDD" id="cd07557">
    <property type="entry name" value="trimeric_dUTPase"/>
    <property type="match status" value="1"/>
</dbReference>
<dbReference type="FunFam" id="2.70.40.10:FF:000002">
    <property type="entry name" value="dUTP diphosphatase"/>
    <property type="match status" value="1"/>
</dbReference>
<dbReference type="Gene3D" id="2.70.40.10">
    <property type="match status" value="1"/>
</dbReference>
<dbReference type="HAMAP" id="MF_00116">
    <property type="entry name" value="dUTPase_bact"/>
    <property type="match status" value="1"/>
</dbReference>
<dbReference type="InterPro" id="IPR008181">
    <property type="entry name" value="dUTPase"/>
</dbReference>
<dbReference type="InterPro" id="IPR029054">
    <property type="entry name" value="dUTPase-like"/>
</dbReference>
<dbReference type="InterPro" id="IPR036157">
    <property type="entry name" value="dUTPase-like_sf"/>
</dbReference>
<dbReference type="InterPro" id="IPR033704">
    <property type="entry name" value="dUTPase_trimeric"/>
</dbReference>
<dbReference type="NCBIfam" id="TIGR00576">
    <property type="entry name" value="dut"/>
    <property type="match status" value="1"/>
</dbReference>
<dbReference type="NCBIfam" id="NF001862">
    <property type="entry name" value="PRK00601.1"/>
    <property type="match status" value="1"/>
</dbReference>
<dbReference type="PANTHER" id="PTHR11241">
    <property type="entry name" value="DEOXYURIDINE 5'-TRIPHOSPHATE NUCLEOTIDOHYDROLASE"/>
    <property type="match status" value="1"/>
</dbReference>
<dbReference type="PANTHER" id="PTHR11241:SF0">
    <property type="entry name" value="DEOXYURIDINE 5'-TRIPHOSPHATE NUCLEOTIDOHYDROLASE"/>
    <property type="match status" value="1"/>
</dbReference>
<dbReference type="Pfam" id="PF00692">
    <property type="entry name" value="dUTPase"/>
    <property type="match status" value="1"/>
</dbReference>
<dbReference type="SUPFAM" id="SSF51283">
    <property type="entry name" value="dUTPase-like"/>
    <property type="match status" value="1"/>
</dbReference>
<gene>
    <name evidence="1" type="primary">dut</name>
    <name type="ordered locus">E2348C_3888</name>
</gene>
<comment type="function">
    <text evidence="1">This enzyme is involved in nucleotide metabolism: it produces dUMP, the immediate precursor of thymidine nucleotides and it decreases the intracellular concentration of dUTP so that uracil cannot be incorporated into DNA.</text>
</comment>
<comment type="catalytic activity">
    <reaction evidence="1">
        <text>dUTP + H2O = dUMP + diphosphate + H(+)</text>
        <dbReference type="Rhea" id="RHEA:10248"/>
        <dbReference type="ChEBI" id="CHEBI:15377"/>
        <dbReference type="ChEBI" id="CHEBI:15378"/>
        <dbReference type="ChEBI" id="CHEBI:33019"/>
        <dbReference type="ChEBI" id="CHEBI:61555"/>
        <dbReference type="ChEBI" id="CHEBI:246422"/>
        <dbReference type="EC" id="3.6.1.23"/>
    </reaction>
</comment>
<comment type="cofactor">
    <cofactor evidence="1">
        <name>Mg(2+)</name>
        <dbReference type="ChEBI" id="CHEBI:18420"/>
    </cofactor>
</comment>
<comment type="pathway">
    <text evidence="1">Pyrimidine metabolism; dUMP biosynthesis; dUMP from dCTP (dUTP route): step 2/2.</text>
</comment>
<comment type="subunit">
    <text evidence="1">Homotrimer.</text>
</comment>
<comment type="similarity">
    <text evidence="1">Belongs to the dUTPase family.</text>
</comment>